<dbReference type="EMBL" id="AF167169">
    <property type="protein sequence ID" value="AAF03689.1"/>
    <property type="molecule type" value="mRNA"/>
</dbReference>
<dbReference type="PIR" id="G59147">
    <property type="entry name" value="G59147"/>
</dbReference>
<dbReference type="ConoServer" id="1734">
    <property type="toxin name" value="Im5.1 precursor"/>
</dbReference>
<dbReference type="GO" id="GO:0005576">
    <property type="term" value="C:extracellular region"/>
    <property type="evidence" value="ECO:0007669"/>
    <property type="project" value="UniProtKB-SubCell"/>
</dbReference>
<dbReference type="GO" id="GO:0090729">
    <property type="term" value="F:toxin activity"/>
    <property type="evidence" value="ECO:0007669"/>
    <property type="project" value="UniProtKB-KW"/>
</dbReference>
<dbReference type="InterPro" id="IPR031565">
    <property type="entry name" value="T-conotoxin"/>
</dbReference>
<dbReference type="Pfam" id="PF16981">
    <property type="entry name" value="Chi-conotoxin"/>
    <property type="match status" value="1"/>
</dbReference>
<organism>
    <name type="scientific">Conus imperialis</name>
    <name type="common">Imperial cone</name>
    <dbReference type="NCBI Taxonomy" id="35631"/>
    <lineage>
        <taxon>Eukaryota</taxon>
        <taxon>Metazoa</taxon>
        <taxon>Spiralia</taxon>
        <taxon>Lophotrochozoa</taxon>
        <taxon>Mollusca</taxon>
        <taxon>Gastropoda</taxon>
        <taxon>Caenogastropoda</taxon>
        <taxon>Neogastropoda</taxon>
        <taxon>Conoidea</taxon>
        <taxon>Conidae</taxon>
        <taxon>Conus</taxon>
        <taxon>Stephanoconus</taxon>
    </lineage>
</organism>
<protein>
    <recommendedName>
        <fullName evidence="3">Conotoxin Im5.1</fullName>
    </recommendedName>
</protein>
<proteinExistence type="inferred from homology"/>
<sequence>MYCLPVFIILLLLISSAPSTPPQPRNKDRVHLISLLDNHKQILQRDWNSCCGKNPGCCPWGK</sequence>
<feature type="signal peptide" evidence="2">
    <location>
        <begin position="1"/>
        <end position="19"/>
    </location>
</feature>
<feature type="propeptide" id="PRO_0000035025" evidence="1">
    <location>
        <begin position="20"/>
        <end position="48"/>
    </location>
</feature>
<feature type="peptide" id="PRO_0000035026" description="Conotoxin Im5.1">
    <location>
        <begin position="49"/>
        <end position="60"/>
    </location>
</feature>
<feature type="modified residue" description="Tryptophan amide" evidence="1">
    <location>
        <position position="60"/>
    </location>
</feature>
<name>CT51_CONIM</name>
<keyword id="KW-0027">Amidation</keyword>
<keyword id="KW-1015">Disulfide bond</keyword>
<keyword id="KW-0964">Secreted</keyword>
<keyword id="KW-0732">Signal</keyword>
<keyword id="KW-0800">Toxin</keyword>
<evidence type="ECO:0000250" key="1"/>
<evidence type="ECO:0000255" key="2"/>
<evidence type="ECO:0000303" key="3">
    <source>
    </source>
</evidence>
<evidence type="ECO:0000305" key="4"/>
<evidence type="ECO:0000305" key="5">
    <source>
    </source>
</evidence>
<comment type="subcellular location">
    <subcellularLocation>
        <location evidence="5">Secreted</location>
    </subcellularLocation>
</comment>
<comment type="tissue specificity">
    <text evidence="5">Expressed by the venom duct.</text>
</comment>
<comment type="domain">
    <text evidence="4">The cysteine framework is V (CC-CC).</text>
</comment>
<comment type="PTM">
    <text evidence="4">Contains 2 disulfide bonds that can be either 'C1-C3, C2-C4' or 'C1-C4, C2-C3', since these disulfide connectivities have been observed for conotoxins with cysteine framework V (for examples, see AC P0DQQ7 and AC P81755).</text>
</comment>
<comment type="similarity">
    <text evidence="4">Belongs to the conotoxin T superfamily.</text>
</comment>
<reference key="1">
    <citation type="journal article" date="1999" name="J. Biol. Chem.">
        <title>The T-superfamily of conotoxins.</title>
        <authorList>
            <person name="Walker C.S."/>
            <person name="Steel D."/>
            <person name="Jacobsen R.B."/>
            <person name="Lirazan M.B."/>
            <person name="Cruz L.J."/>
            <person name="Hooper D."/>
            <person name="Shetty R."/>
            <person name="DelaCruz R.C."/>
            <person name="Nielsen J.S."/>
            <person name="Zhou L.M."/>
            <person name="Bandyopadhyay P."/>
            <person name="Craig A.G."/>
            <person name="Olivera B.M."/>
        </authorList>
    </citation>
    <scope>NUCLEOTIDE SEQUENCE [MRNA]</scope>
    <source>
        <tissue>Venom duct</tissue>
    </source>
</reference>
<reference key="2">
    <citation type="journal article" date="1999" name="J. Biol. Chem.">
        <authorList>
            <person name="Walker C.S."/>
            <person name="Steel D."/>
            <person name="Jacobsen R.B."/>
            <person name="Lirazan M.B."/>
            <person name="Cruz L.J."/>
            <person name="Hooper D."/>
            <person name="Shetty R."/>
            <person name="DelaCruz R.C."/>
            <person name="Nielsen J.S."/>
            <person name="Zhou L.M."/>
            <person name="Bandyopadhyay P."/>
            <person name="Craig A.G."/>
            <person name="Olivera B.M."/>
        </authorList>
    </citation>
    <scope>ERRATUM OF PUBMED:10521453</scope>
</reference>
<accession>Q9U6Z5</accession>